<proteinExistence type="inferred from homology"/>
<name>RS3_NOSS1</name>
<evidence type="ECO:0000255" key="1">
    <source>
        <dbReference type="HAMAP-Rule" id="MF_01309"/>
    </source>
</evidence>
<evidence type="ECO:0000256" key="2">
    <source>
        <dbReference type="SAM" id="MobiDB-lite"/>
    </source>
</evidence>
<evidence type="ECO:0000305" key="3"/>
<dbReference type="EMBL" id="BA000019">
    <property type="protein sequence ID" value="BAB75908.1"/>
    <property type="molecule type" value="Genomic_DNA"/>
</dbReference>
<dbReference type="PIR" id="AB2332">
    <property type="entry name" value="AB2332"/>
</dbReference>
<dbReference type="RefSeq" id="WP_010998347.1">
    <property type="nucleotide sequence ID" value="NZ_RSCN01000010.1"/>
</dbReference>
<dbReference type="SMR" id="Q8YPI5"/>
<dbReference type="STRING" id="103690.gene:10496258"/>
<dbReference type="KEGG" id="ana:all4209"/>
<dbReference type="eggNOG" id="COG0092">
    <property type="taxonomic scope" value="Bacteria"/>
</dbReference>
<dbReference type="OrthoDB" id="9806396at2"/>
<dbReference type="Proteomes" id="UP000002483">
    <property type="component" value="Chromosome"/>
</dbReference>
<dbReference type="GO" id="GO:0022627">
    <property type="term" value="C:cytosolic small ribosomal subunit"/>
    <property type="evidence" value="ECO:0007669"/>
    <property type="project" value="TreeGrafter"/>
</dbReference>
<dbReference type="GO" id="GO:0003729">
    <property type="term" value="F:mRNA binding"/>
    <property type="evidence" value="ECO:0007669"/>
    <property type="project" value="UniProtKB-UniRule"/>
</dbReference>
<dbReference type="GO" id="GO:0019843">
    <property type="term" value="F:rRNA binding"/>
    <property type="evidence" value="ECO:0007669"/>
    <property type="project" value="UniProtKB-UniRule"/>
</dbReference>
<dbReference type="GO" id="GO:0003735">
    <property type="term" value="F:structural constituent of ribosome"/>
    <property type="evidence" value="ECO:0007669"/>
    <property type="project" value="InterPro"/>
</dbReference>
<dbReference type="GO" id="GO:0006412">
    <property type="term" value="P:translation"/>
    <property type="evidence" value="ECO:0007669"/>
    <property type="project" value="UniProtKB-UniRule"/>
</dbReference>
<dbReference type="CDD" id="cd02412">
    <property type="entry name" value="KH-II_30S_S3"/>
    <property type="match status" value="1"/>
</dbReference>
<dbReference type="FunFam" id="3.30.300.20:FF:000001">
    <property type="entry name" value="30S ribosomal protein S3"/>
    <property type="match status" value="1"/>
</dbReference>
<dbReference type="Gene3D" id="3.30.300.20">
    <property type="match status" value="1"/>
</dbReference>
<dbReference type="Gene3D" id="3.30.1140.32">
    <property type="entry name" value="Ribosomal protein S3, C-terminal domain"/>
    <property type="match status" value="1"/>
</dbReference>
<dbReference type="HAMAP" id="MF_01309_B">
    <property type="entry name" value="Ribosomal_uS3_B"/>
    <property type="match status" value="1"/>
</dbReference>
<dbReference type="InterPro" id="IPR004087">
    <property type="entry name" value="KH_dom"/>
</dbReference>
<dbReference type="InterPro" id="IPR015946">
    <property type="entry name" value="KH_dom-like_a/b"/>
</dbReference>
<dbReference type="InterPro" id="IPR004044">
    <property type="entry name" value="KH_dom_type_2"/>
</dbReference>
<dbReference type="InterPro" id="IPR009019">
    <property type="entry name" value="KH_sf_prok-type"/>
</dbReference>
<dbReference type="InterPro" id="IPR036419">
    <property type="entry name" value="Ribosomal_S3_C_sf"/>
</dbReference>
<dbReference type="InterPro" id="IPR005704">
    <property type="entry name" value="Ribosomal_uS3_bac-typ"/>
</dbReference>
<dbReference type="InterPro" id="IPR001351">
    <property type="entry name" value="Ribosomal_uS3_C"/>
</dbReference>
<dbReference type="InterPro" id="IPR018280">
    <property type="entry name" value="Ribosomal_uS3_CS"/>
</dbReference>
<dbReference type="NCBIfam" id="TIGR01009">
    <property type="entry name" value="rpsC_bact"/>
    <property type="match status" value="1"/>
</dbReference>
<dbReference type="PANTHER" id="PTHR11760">
    <property type="entry name" value="30S/40S RIBOSOMAL PROTEIN S3"/>
    <property type="match status" value="1"/>
</dbReference>
<dbReference type="PANTHER" id="PTHR11760:SF19">
    <property type="entry name" value="SMALL RIBOSOMAL SUBUNIT PROTEIN US3C"/>
    <property type="match status" value="1"/>
</dbReference>
<dbReference type="Pfam" id="PF07650">
    <property type="entry name" value="KH_2"/>
    <property type="match status" value="1"/>
</dbReference>
<dbReference type="Pfam" id="PF00189">
    <property type="entry name" value="Ribosomal_S3_C"/>
    <property type="match status" value="1"/>
</dbReference>
<dbReference type="SMART" id="SM00322">
    <property type="entry name" value="KH"/>
    <property type="match status" value="1"/>
</dbReference>
<dbReference type="SUPFAM" id="SSF54814">
    <property type="entry name" value="Prokaryotic type KH domain (KH-domain type II)"/>
    <property type="match status" value="1"/>
</dbReference>
<dbReference type="SUPFAM" id="SSF54821">
    <property type="entry name" value="Ribosomal protein S3 C-terminal domain"/>
    <property type="match status" value="1"/>
</dbReference>
<dbReference type="PROSITE" id="PS50823">
    <property type="entry name" value="KH_TYPE_2"/>
    <property type="match status" value="1"/>
</dbReference>
<dbReference type="PROSITE" id="PS00548">
    <property type="entry name" value="RIBOSOMAL_S3"/>
    <property type="match status" value="1"/>
</dbReference>
<accession>Q8YPI5</accession>
<gene>
    <name evidence="1" type="primary">rpsC</name>
    <name evidence="1" type="synonym">rps3</name>
    <name type="ordered locus">all4209</name>
</gene>
<comment type="function">
    <text evidence="1">Binds the lower part of the 30S subunit head. Binds mRNA in the 70S ribosome, positioning it for translation.</text>
</comment>
<comment type="subunit">
    <text evidence="1">Part of the 30S ribosomal subunit. Forms a tight complex with proteins S10 and S14.</text>
</comment>
<comment type="similarity">
    <text evidence="1">Belongs to the universal ribosomal protein uS3 family.</text>
</comment>
<feature type="chain" id="PRO_0000130060" description="Small ribosomal subunit protein uS3">
    <location>
        <begin position="1"/>
        <end position="260"/>
    </location>
</feature>
<feature type="domain" description="KH type-2" evidence="1">
    <location>
        <begin position="39"/>
        <end position="114"/>
    </location>
</feature>
<feature type="region of interest" description="Disordered" evidence="2">
    <location>
        <begin position="218"/>
        <end position="260"/>
    </location>
</feature>
<feature type="compositionally biased region" description="Basic and acidic residues" evidence="2">
    <location>
        <begin position="227"/>
        <end position="243"/>
    </location>
</feature>
<feature type="compositionally biased region" description="Basic and acidic residues" evidence="2">
    <location>
        <begin position="251"/>
        <end position="260"/>
    </location>
</feature>
<sequence>MGQKIHPVGFRLGITQEHQSRWFAEPSRYPELLQEDHKLRQYIEQKLGRLAQNNAGISEVRIERKADQIDLEVRTARPGVVVGRGGQGIEALRTGLQTLLGGNRQIRINVVEVQRVDADAYLIAEFIAQQLERRVSFRRVVRQAIQRAQKAGIQGIKVQVSGRLNGAEIARTEWTREGRVPLHTLRADIDYSYCTAKTVYGILGIKVWVFKGEIIPGQEVATPPPSPRDRDRDRGDRDREPRRRQQQRRRQQFEDRSNEG</sequence>
<organism>
    <name type="scientific">Nostoc sp. (strain PCC 7120 / SAG 25.82 / UTEX 2576)</name>
    <dbReference type="NCBI Taxonomy" id="103690"/>
    <lineage>
        <taxon>Bacteria</taxon>
        <taxon>Bacillati</taxon>
        <taxon>Cyanobacteriota</taxon>
        <taxon>Cyanophyceae</taxon>
        <taxon>Nostocales</taxon>
        <taxon>Nostocaceae</taxon>
        <taxon>Nostoc</taxon>
    </lineage>
</organism>
<protein>
    <recommendedName>
        <fullName evidence="1">Small ribosomal subunit protein uS3</fullName>
    </recommendedName>
    <alternativeName>
        <fullName evidence="3">30S ribosomal protein S3</fullName>
    </alternativeName>
</protein>
<keyword id="KW-1185">Reference proteome</keyword>
<keyword id="KW-0687">Ribonucleoprotein</keyword>
<keyword id="KW-0689">Ribosomal protein</keyword>
<keyword id="KW-0694">RNA-binding</keyword>
<keyword id="KW-0699">rRNA-binding</keyword>
<reference key="1">
    <citation type="journal article" date="2001" name="DNA Res.">
        <title>Complete genomic sequence of the filamentous nitrogen-fixing cyanobacterium Anabaena sp. strain PCC 7120.</title>
        <authorList>
            <person name="Kaneko T."/>
            <person name="Nakamura Y."/>
            <person name="Wolk C.P."/>
            <person name="Kuritz T."/>
            <person name="Sasamoto S."/>
            <person name="Watanabe A."/>
            <person name="Iriguchi M."/>
            <person name="Ishikawa A."/>
            <person name="Kawashima K."/>
            <person name="Kimura T."/>
            <person name="Kishida Y."/>
            <person name="Kohara M."/>
            <person name="Matsumoto M."/>
            <person name="Matsuno A."/>
            <person name="Muraki A."/>
            <person name="Nakazaki N."/>
            <person name="Shimpo S."/>
            <person name="Sugimoto M."/>
            <person name="Takazawa M."/>
            <person name="Yamada M."/>
            <person name="Yasuda M."/>
            <person name="Tabata S."/>
        </authorList>
    </citation>
    <scope>NUCLEOTIDE SEQUENCE [LARGE SCALE GENOMIC DNA]</scope>
    <source>
        <strain>PCC 7120 / SAG 25.82 / UTEX 2576</strain>
    </source>
</reference>